<protein>
    <recommendedName>
        <fullName evidence="1">Beta-ketoacyl-[acyl-carrier-protein] synthase III</fullName>
        <shortName evidence="1">Beta-ketoacyl-ACP synthase III</shortName>
        <shortName evidence="1">KAS III</shortName>
        <ecNumber evidence="1">2.3.1.180</ecNumber>
    </recommendedName>
    <alternativeName>
        <fullName evidence="1">3-oxoacyl-[acyl-carrier-protein] synthase 3</fullName>
    </alternativeName>
    <alternativeName>
        <fullName evidence="1">3-oxoacyl-[acyl-carrier-protein] synthase III</fullName>
    </alternativeName>
</protein>
<accession>O85139</accession>
<proteinExistence type="inferred from homology"/>
<keyword id="KW-0012">Acyltransferase</keyword>
<keyword id="KW-0963">Cytoplasm</keyword>
<keyword id="KW-0275">Fatty acid biosynthesis</keyword>
<keyword id="KW-0276">Fatty acid metabolism</keyword>
<keyword id="KW-0444">Lipid biosynthesis</keyword>
<keyword id="KW-0443">Lipid metabolism</keyword>
<keyword id="KW-0511">Multifunctional enzyme</keyword>
<keyword id="KW-1185">Reference proteome</keyword>
<keyword id="KW-0808">Transferase</keyword>
<evidence type="ECO:0000255" key="1">
    <source>
        <dbReference type="HAMAP-Rule" id="MF_01815"/>
    </source>
</evidence>
<sequence>MYTKIIGTGSYLPEQVRTNADLEKMVETSDEWIVTRTGIRKRHIAAPNETVATMGFTAANRAIEMAGIDKDQIGLIVVATTSATHAFPSAACQIQSMLGIKGCPAFDVAAACAGFTYALSIADQYVKSGAVKHALVVGSDVLARTCDPGDRGTIIIFGDGAGAAVLSASEEPGIISTHLHADGRYGELLTLPNADRVNPDNPIYLTMAGNEVFKVAVTELAHIVDETLAANNLDRSELDWLVPHQANLRIISATAKKLGMSMDNVVVTLDRHGNTSAASVPCALDEAVRDGRIKAGQLVLLEAFGGGFTWGSALIRF</sequence>
<name>FABH_SALTY</name>
<organism>
    <name type="scientific">Salmonella typhimurium (strain LT2 / SGSC1412 / ATCC 700720)</name>
    <dbReference type="NCBI Taxonomy" id="99287"/>
    <lineage>
        <taxon>Bacteria</taxon>
        <taxon>Pseudomonadati</taxon>
        <taxon>Pseudomonadota</taxon>
        <taxon>Gammaproteobacteria</taxon>
        <taxon>Enterobacterales</taxon>
        <taxon>Enterobacteriaceae</taxon>
        <taxon>Salmonella</taxon>
    </lineage>
</organism>
<dbReference type="EC" id="2.3.1.180" evidence="1"/>
<dbReference type="EMBL" id="AF044668">
    <property type="protein sequence ID" value="AAC38648.1"/>
    <property type="molecule type" value="Genomic_DNA"/>
</dbReference>
<dbReference type="EMBL" id="AE006468">
    <property type="protein sequence ID" value="AAL20122.1"/>
    <property type="molecule type" value="Genomic_DNA"/>
</dbReference>
<dbReference type="RefSeq" id="NP_460163.1">
    <property type="nucleotide sequence ID" value="NC_003197.2"/>
</dbReference>
<dbReference type="RefSeq" id="WP_000288154.1">
    <property type="nucleotide sequence ID" value="NC_003197.2"/>
</dbReference>
<dbReference type="SMR" id="O85139"/>
<dbReference type="STRING" id="99287.STM1193"/>
<dbReference type="PaxDb" id="99287-STM1193"/>
<dbReference type="GeneID" id="1252711"/>
<dbReference type="KEGG" id="stm:STM1193"/>
<dbReference type="PATRIC" id="fig|99287.12.peg.1262"/>
<dbReference type="HOGENOM" id="CLU_039592_3_1_6"/>
<dbReference type="OMA" id="WGSEGDK"/>
<dbReference type="PhylomeDB" id="O85139"/>
<dbReference type="BioCyc" id="SENT99287:STM1193-MONOMER"/>
<dbReference type="UniPathway" id="UPA00094"/>
<dbReference type="Proteomes" id="UP000001014">
    <property type="component" value="Chromosome"/>
</dbReference>
<dbReference type="GO" id="GO:0005737">
    <property type="term" value="C:cytoplasm"/>
    <property type="evidence" value="ECO:0007669"/>
    <property type="project" value="UniProtKB-SubCell"/>
</dbReference>
<dbReference type="GO" id="GO:0004315">
    <property type="term" value="F:3-oxoacyl-[acyl-carrier-protein] synthase activity"/>
    <property type="evidence" value="ECO:0007669"/>
    <property type="project" value="InterPro"/>
</dbReference>
<dbReference type="GO" id="GO:0033818">
    <property type="term" value="F:beta-ketoacyl-acyl-carrier-protein synthase III activity"/>
    <property type="evidence" value="ECO:0007669"/>
    <property type="project" value="UniProtKB-UniRule"/>
</dbReference>
<dbReference type="GO" id="GO:0006633">
    <property type="term" value="P:fatty acid biosynthetic process"/>
    <property type="evidence" value="ECO:0007669"/>
    <property type="project" value="UniProtKB-UniRule"/>
</dbReference>
<dbReference type="CDD" id="cd00830">
    <property type="entry name" value="KAS_III"/>
    <property type="match status" value="1"/>
</dbReference>
<dbReference type="FunFam" id="3.40.47.10:FF:000004">
    <property type="entry name" value="3-oxoacyl-[acyl-carrier-protein] synthase 3"/>
    <property type="match status" value="1"/>
</dbReference>
<dbReference type="Gene3D" id="3.40.47.10">
    <property type="match status" value="1"/>
</dbReference>
<dbReference type="HAMAP" id="MF_01815">
    <property type="entry name" value="FabH"/>
    <property type="match status" value="1"/>
</dbReference>
<dbReference type="InterPro" id="IPR013747">
    <property type="entry name" value="ACP_syn_III_C"/>
</dbReference>
<dbReference type="InterPro" id="IPR013751">
    <property type="entry name" value="ACP_syn_III_N"/>
</dbReference>
<dbReference type="InterPro" id="IPR004655">
    <property type="entry name" value="FabH"/>
</dbReference>
<dbReference type="InterPro" id="IPR016039">
    <property type="entry name" value="Thiolase-like"/>
</dbReference>
<dbReference type="NCBIfam" id="TIGR00747">
    <property type="entry name" value="fabH"/>
    <property type="match status" value="1"/>
</dbReference>
<dbReference type="NCBIfam" id="NF006829">
    <property type="entry name" value="PRK09352.1"/>
    <property type="match status" value="1"/>
</dbReference>
<dbReference type="PANTHER" id="PTHR43091">
    <property type="entry name" value="3-OXOACYL-[ACYL-CARRIER-PROTEIN] SYNTHASE"/>
    <property type="match status" value="1"/>
</dbReference>
<dbReference type="PANTHER" id="PTHR43091:SF1">
    <property type="entry name" value="BETA-KETOACYL-[ACYL-CARRIER-PROTEIN] SYNTHASE III, CHLOROPLASTIC"/>
    <property type="match status" value="1"/>
</dbReference>
<dbReference type="Pfam" id="PF08545">
    <property type="entry name" value="ACP_syn_III"/>
    <property type="match status" value="1"/>
</dbReference>
<dbReference type="Pfam" id="PF08541">
    <property type="entry name" value="ACP_syn_III_C"/>
    <property type="match status" value="1"/>
</dbReference>
<dbReference type="SUPFAM" id="SSF53901">
    <property type="entry name" value="Thiolase-like"/>
    <property type="match status" value="1"/>
</dbReference>
<gene>
    <name evidence="1" type="primary">fabH</name>
    <name type="ordered locus">STM1193</name>
</gene>
<comment type="function">
    <text evidence="1">Catalyzes the condensation reaction of fatty acid synthesis by the addition to an acyl acceptor of two carbons from malonyl-ACP. Catalyzes the first condensation reaction which initiates fatty acid synthesis and may therefore play a role in governing the total rate of fatty acid production. Possesses both acetoacetyl-ACP synthase and acetyl transacylase activities. Its substrate specificity determines the biosynthesis of branched-chain and/or straight-chain of fatty acids.</text>
</comment>
<comment type="catalytic activity">
    <reaction evidence="1">
        <text>malonyl-[ACP] + acetyl-CoA + H(+) = 3-oxobutanoyl-[ACP] + CO2 + CoA</text>
        <dbReference type="Rhea" id="RHEA:12080"/>
        <dbReference type="Rhea" id="RHEA-COMP:9623"/>
        <dbReference type="Rhea" id="RHEA-COMP:9625"/>
        <dbReference type="ChEBI" id="CHEBI:15378"/>
        <dbReference type="ChEBI" id="CHEBI:16526"/>
        <dbReference type="ChEBI" id="CHEBI:57287"/>
        <dbReference type="ChEBI" id="CHEBI:57288"/>
        <dbReference type="ChEBI" id="CHEBI:78449"/>
        <dbReference type="ChEBI" id="CHEBI:78450"/>
        <dbReference type="EC" id="2.3.1.180"/>
    </reaction>
</comment>
<comment type="pathway">
    <text evidence="1">Lipid metabolism; fatty acid biosynthesis.</text>
</comment>
<comment type="subunit">
    <text evidence="1">Homodimer.</text>
</comment>
<comment type="subcellular location">
    <subcellularLocation>
        <location evidence="1">Cytoplasm</location>
    </subcellularLocation>
</comment>
<comment type="domain">
    <text evidence="1">The last Arg residue of the ACP-binding site is essential for the weak association between ACP/AcpP and FabH.</text>
</comment>
<comment type="similarity">
    <text evidence="1">Belongs to the thiolase-like superfamily. FabH family.</text>
</comment>
<feature type="chain" id="PRO_0000110465" description="Beta-ketoacyl-[acyl-carrier-protein] synthase III">
    <location>
        <begin position="1"/>
        <end position="317"/>
    </location>
</feature>
<feature type="region of interest" description="ACP-binding" evidence="1">
    <location>
        <begin position="245"/>
        <end position="249"/>
    </location>
</feature>
<feature type="active site" evidence="1">
    <location>
        <position position="112"/>
    </location>
</feature>
<feature type="active site" evidence="1">
    <location>
        <position position="244"/>
    </location>
</feature>
<feature type="active site" evidence="1">
    <location>
        <position position="274"/>
    </location>
</feature>
<reference key="1">
    <citation type="journal article" date="1998" name="J. Bacteriol.">
        <title>Transcriptional analysis of essential genes of the Escherichia coli fatty acid biosynthesis gene cluster by functional replacement with the analogous Salmonella typhimurium gene cluster.</title>
        <authorList>
            <person name="Zhang Y."/>
            <person name="Cronan J.E. Jr."/>
        </authorList>
    </citation>
    <scope>NUCLEOTIDE SEQUENCE [GENOMIC DNA]</scope>
    <source>
        <strain>LT2</strain>
    </source>
</reference>
<reference key="2">
    <citation type="journal article" date="2001" name="Nature">
        <title>Complete genome sequence of Salmonella enterica serovar Typhimurium LT2.</title>
        <authorList>
            <person name="McClelland M."/>
            <person name="Sanderson K.E."/>
            <person name="Spieth J."/>
            <person name="Clifton S.W."/>
            <person name="Latreille P."/>
            <person name="Courtney L."/>
            <person name="Porwollik S."/>
            <person name="Ali J."/>
            <person name="Dante M."/>
            <person name="Du F."/>
            <person name="Hou S."/>
            <person name="Layman D."/>
            <person name="Leonard S."/>
            <person name="Nguyen C."/>
            <person name="Scott K."/>
            <person name="Holmes A."/>
            <person name="Grewal N."/>
            <person name="Mulvaney E."/>
            <person name="Ryan E."/>
            <person name="Sun H."/>
            <person name="Florea L."/>
            <person name="Miller W."/>
            <person name="Stoneking T."/>
            <person name="Nhan M."/>
            <person name="Waterston R."/>
            <person name="Wilson R.K."/>
        </authorList>
    </citation>
    <scope>NUCLEOTIDE SEQUENCE [LARGE SCALE GENOMIC DNA]</scope>
    <source>
        <strain>LT2 / SGSC1412 / ATCC 700720</strain>
    </source>
</reference>